<comment type="function">
    <text evidence="1">Catalyzes the hydrolytic deamination of adenine to hypoxanthine. Plays an important role in the purine salvage pathway and in nitrogen catabolism.</text>
</comment>
<comment type="catalytic activity">
    <reaction evidence="1">
        <text>adenine + H2O + H(+) = hypoxanthine + NH4(+)</text>
        <dbReference type="Rhea" id="RHEA:23688"/>
        <dbReference type="ChEBI" id="CHEBI:15377"/>
        <dbReference type="ChEBI" id="CHEBI:15378"/>
        <dbReference type="ChEBI" id="CHEBI:16708"/>
        <dbReference type="ChEBI" id="CHEBI:17368"/>
        <dbReference type="ChEBI" id="CHEBI:28938"/>
        <dbReference type="EC" id="3.5.4.2"/>
    </reaction>
</comment>
<comment type="cofactor">
    <cofactor evidence="1">
        <name>Zn(2+)</name>
        <dbReference type="ChEBI" id="CHEBI:29105"/>
    </cofactor>
    <text evidence="1">Binds 1 zinc ion per subunit.</text>
</comment>
<comment type="similarity">
    <text evidence="1">Belongs to the metallo-dependent hydrolases superfamily. Adenosine and AMP deaminases family. Adenine deaminase type 2 subfamily.</text>
</comment>
<accession>Q20YN2</accession>
<protein>
    <recommendedName>
        <fullName evidence="1">Adenine deaminase</fullName>
        <shortName evidence="1">ADE</shortName>
        <ecNumber evidence="1">3.5.4.2</ecNumber>
    </recommendedName>
    <alternativeName>
        <fullName evidence="1">Adenine aminohydrolase</fullName>
        <shortName evidence="1">AAH</shortName>
    </alternativeName>
</protein>
<keyword id="KW-0378">Hydrolase</keyword>
<keyword id="KW-0479">Metal-binding</keyword>
<keyword id="KW-0546">Nucleotide metabolism</keyword>
<keyword id="KW-0862">Zinc</keyword>
<reference key="1">
    <citation type="submission" date="2006-03" db="EMBL/GenBank/DDBJ databases">
        <title>Complete sequence of Rhodopseudomonas palustris BisB18.</title>
        <authorList>
            <consortium name="US DOE Joint Genome Institute"/>
            <person name="Copeland A."/>
            <person name="Lucas S."/>
            <person name="Lapidus A."/>
            <person name="Barry K."/>
            <person name="Detter J.C."/>
            <person name="Glavina del Rio T."/>
            <person name="Hammon N."/>
            <person name="Israni S."/>
            <person name="Dalin E."/>
            <person name="Tice H."/>
            <person name="Pitluck S."/>
            <person name="Chain P."/>
            <person name="Malfatti S."/>
            <person name="Shin M."/>
            <person name="Vergez L."/>
            <person name="Schmutz J."/>
            <person name="Larimer F."/>
            <person name="Land M."/>
            <person name="Hauser L."/>
            <person name="Pelletier D.A."/>
            <person name="Kyrpides N."/>
            <person name="Anderson I."/>
            <person name="Oda Y."/>
            <person name="Harwood C.S."/>
            <person name="Richardson P."/>
        </authorList>
    </citation>
    <scope>NUCLEOTIDE SEQUENCE [LARGE SCALE GENOMIC DNA]</scope>
    <source>
        <strain>BisB18</strain>
    </source>
</reference>
<organism>
    <name type="scientific">Rhodopseudomonas palustris (strain BisB18)</name>
    <dbReference type="NCBI Taxonomy" id="316056"/>
    <lineage>
        <taxon>Bacteria</taxon>
        <taxon>Pseudomonadati</taxon>
        <taxon>Pseudomonadota</taxon>
        <taxon>Alphaproteobacteria</taxon>
        <taxon>Hyphomicrobiales</taxon>
        <taxon>Nitrobacteraceae</taxon>
        <taxon>Rhodopseudomonas</taxon>
    </lineage>
</organism>
<dbReference type="EC" id="3.5.4.2" evidence="1"/>
<dbReference type="EMBL" id="CP000301">
    <property type="protein sequence ID" value="ABD89754.1"/>
    <property type="molecule type" value="Genomic_DNA"/>
</dbReference>
<dbReference type="SMR" id="Q20YN2"/>
<dbReference type="STRING" id="316056.RPC_4230"/>
<dbReference type="KEGG" id="rpc:RPC_4230"/>
<dbReference type="eggNOG" id="COG1816">
    <property type="taxonomic scope" value="Bacteria"/>
</dbReference>
<dbReference type="HOGENOM" id="CLU_039228_7_0_5"/>
<dbReference type="OrthoDB" id="105475at2"/>
<dbReference type="GO" id="GO:0005829">
    <property type="term" value="C:cytosol"/>
    <property type="evidence" value="ECO:0007669"/>
    <property type="project" value="TreeGrafter"/>
</dbReference>
<dbReference type="GO" id="GO:0000034">
    <property type="term" value="F:adenine deaminase activity"/>
    <property type="evidence" value="ECO:0007669"/>
    <property type="project" value="UniProtKB-UniRule"/>
</dbReference>
<dbReference type="GO" id="GO:0008270">
    <property type="term" value="F:zinc ion binding"/>
    <property type="evidence" value="ECO:0007669"/>
    <property type="project" value="UniProtKB-UniRule"/>
</dbReference>
<dbReference type="GO" id="GO:0006146">
    <property type="term" value="P:adenine catabolic process"/>
    <property type="evidence" value="ECO:0007669"/>
    <property type="project" value="UniProtKB-UniRule"/>
</dbReference>
<dbReference type="GO" id="GO:0043103">
    <property type="term" value="P:hypoxanthine salvage"/>
    <property type="evidence" value="ECO:0007669"/>
    <property type="project" value="UniProtKB-UniRule"/>
</dbReference>
<dbReference type="GO" id="GO:0009117">
    <property type="term" value="P:nucleotide metabolic process"/>
    <property type="evidence" value="ECO:0007669"/>
    <property type="project" value="UniProtKB-KW"/>
</dbReference>
<dbReference type="Gene3D" id="3.20.20.140">
    <property type="entry name" value="Metal-dependent hydrolases"/>
    <property type="match status" value="1"/>
</dbReference>
<dbReference type="HAMAP" id="MF_01962">
    <property type="entry name" value="Adenine_deaminase"/>
    <property type="match status" value="1"/>
</dbReference>
<dbReference type="InterPro" id="IPR001365">
    <property type="entry name" value="A_deaminase_dom"/>
</dbReference>
<dbReference type="InterPro" id="IPR028892">
    <property type="entry name" value="ADE"/>
</dbReference>
<dbReference type="InterPro" id="IPR006330">
    <property type="entry name" value="Ado/ade_deaminase"/>
</dbReference>
<dbReference type="InterPro" id="IPR032466">
    <property type="entry name" value="Metal_Hydrolase"/>
</dbReference>
<dbReference type="NCBIfam" id="TIGR01430">
    <property type="entry name" value="aden_deam"/>
    <property type="match status" value="1"/>
</dbReference>
<dbReference type="NCBIfam" id="NF006850">
    <property type="entry name" value="PRK09358.1-6"/>
    <property type="match status" value="1"/>
</dbReference>
<dbReference type="PANTHER" id="PTHR43114">
    <property type="entry name" value="ADENINE DEAMINASE"/>
    <property type="match status" value="1"/>
</dbReference>
<dbReference type="PANTHER" id="PTHR43114:SF6">
    <property type="entry name" value="ADENINE DEAMINASE"/>
    <property type="match status" value="1"/>
</dbReference>
<dbReference type="Pfam" id="PF00962">
    <property type="entry name" value="A_deaminase"/>
    <property type="match status" value="1"/>
</dbReference>
<dbReference type="SUPFAM" id="SSF51556">
    <property type="entry name" value="Metallo-dependent hydrolases"/>
    <property type="match status" value="1"/>
</dbReference>
<proteinExistence type="inferred from homology"/>
<name>ADE_RHOPB</name>
<gene>
    <name type="ordered locus">RPC_4230</name>
</gene>
<feature type="chain" id="PRO_1000017692" description="Adenine deaminase">
    <location>
        <begin position="1"/>
        <end position="343"/>
    </location>
</feature>
<feature type="active site" description="Proton donor" evidence="1">
    <location>
        <position position="200"/>
    </location>
</feature>
<feature type="binding site" evidence="1">
    <location>
        <position position="17"/>
    </location>
    <ligand>
        <name>Zn(2+)</name>
        <dbReference type="ChEBI" id="CHEBI:29105"/>
        <note>catalytic</note>
    </ligand>
</feature>
<feature type="binding site" evidence="1">
    <location>
        <position position="19"/>
    </location>
    <ligand>
        <name>Zn(2+)</name>
        <dbReference type="ChEBI" id="CHEBI:29105"/>
        <note>catalytic</note>
    </ligand>
</feature>
<feature type="binding site" evidence="1">
    <location>
        <position position="197"/>
    </location>
    <ligand>
        <name>Zn(2+)</name>
        <dbReference type="ChEBI" id="CHEBI:29105"/>
        <note>catalytic</note>
    </ligand>
</feature>
<feature type="binding site" evidence="1">
    <location>
        <position position="278"/>
    </location>
    <ligand>
        <name>Zn(2+)</name>
        <dbReference type="ChEBI" id="CHEBI:29105"/>
        <note>catalytic</note>
    </ligand>
</feature>
<feature type="binding site" evidence="1">
    <location>
        <position position="279"/>
    </location>
    <ligand>
        <name>substrate</name>
    </ligand>
</feature>
<feature type="site" description="Important for catalytic activity" evidence="1">
    <location>
        <position position="221"/>
    </location>
</feature>
<sequence>MTDLESFIRGLPKTDLHMHIEGSIEPQLMLDLAARNGMKLRWDTAEALRGAYQFDNLQSFLDLYFEGCKVLVAEGDFRDVTRAYLRRAHEDGVVRAELFIGPQSFTERGTPLEALMSGVLGAMQEARREHGLSVGLMISVHRHRTEADAMVMLDQIMPWKDQIIAIGMGGAELGNPPAKFARFFKAARDRGFRTTVHAGEEGPAAYVREALELLQVDRIDHGNACLADPDLVRELAMRRIPLTVCPLSNLRLKGVTEMARHPLKTMMAQGLHVTVNTDDPPYFGGYVTENLLACREALDLSREEIVRLVRNGLEAAFVTTEEREILLRQLDDYLARHAVASTS</sequence>
<evidence type="ECO:0000255" key="1">
    <source>
        <dbReference type="HAMAP-Rule" id="MF_01962"/>
    </source>
</evidence>